<dbReference type="EMBL" id="BC096790">
    <property type="protein sequence ID" value="AAH96790.1"/>
    <property type="molecule type" value="mRNA"/>
</dbReference>
<dbReference type="RefSeq" id="NP_001025240.1">
    <property type="nucleotide sequence ID" value="NM_001030069.1"/>
</dbReference>
<dbReference type="SMR" id="Q4V9P3"/>
<dbReference type="FunCoup" id="Q4V9P3">
    <property type="interactions" value="1"/>
</dbReference>
<dbReference type="STRING" id="7955.ENSDARP00000029749"/>
<dbReference type="PaxDb" id="7955-ENSDARP00000029749"/>
<dbReference type="GeneID" id="337556"/>
<dbReference type="KEGG" id="dre:337556"/>
<dbReference type="AGR" id="ZFIN:ZDB-GENE-030131-9502"/>
<dbReference type="CTD" id="337556"/>
<dbReference type="ZFIN" id="ZDB-GENE-030131-9502">
    <property type="gene designation" value="rgs7bpb"/>
</dbReference>
<dbReference type="eggNOG" id="ENOG502SKZ4">
    <property type="taxonomic scope" value="Eukaryota"/>
</dbReference>
<dbReference type="InParanoid" id="Q4V9P3"/>
<dbReference type="OrthoDB" id="9876293at2759"/>
<dbReference type="PhylomeDB" id="Q4V9P3"/>
<dbReference type="PRO" id="PR:Q4V9P3"/>
<dbReference type="Proteomes" id="UP000000437">
    <property type="component" value="Alternate scaffold 21"/>
</dbReference>
<dbReference type="Proteomes" id="UP000000437">
    <property type="component" value="Chromosome 21"/>
</dbReference>
<dbReference type="GO" id="GO:0005737">
    <property type="term" value="C:cytoplasm"/>
    <property type="evidence" value="ECO:0007669"/>
    <property type="project" value="UniProtKB-SubCell"/>
</dbReference>
<dbReference type="GO" id="GO:0043005">
    <property type="term" value="C:neuron projection"/>
    <property type="evidence" value="ECO:0000318"/>
    <property type="project" value="GO_Central"/>
</dbReference>
<dbReference type="GO" id="GO:0005634">
    <property type="term" value="C:nucleus"/>
    <property type="evidence" value="ECO:0000318"/>
    <property type="project" value="GO_Central"/>
</dbReference>
<dbReference type="GO" id="GO:0005886">
    <property type="term" value="C:plasma membrane"/>
    <property type="evidence" value="ECO:0007669"/>
    <property type="project" value="UniProtKB-SubCell"/>
</dbReference>
<dbReference type="GO" id="GO:0098794">
    <property type="term" value="C:postsynapse"/>
    <property type="evidence" value="ECO:0000318"/>
    <property type="project" value="GO_Central"/>
</dbReference>
<dbReference type="GO" id="GO:0007186">
    <property type="term" value="P:G protein-coupled receptor signaling pathway"/>
    <property type="evidence" value="ECO:0000318"/>
    <property type="project" value="GO_Central"/>
</dbReference>
<dbReference type="GO" id="GO:0009968">
    <property type="term" value="P:negative regulation of signal transduction"/>
    <property type="evidence" value="ECO:0007669"/>
    <property type="project" value="UniProtKB-KW"/>
</dbReference>
<dbReference type="InterPro" id="IPR026512">
    <property type="entry name" value="RGS7BP/RGS9BP"/>
</dbReference>
<dbReference type="PANTHER" id="PTHR21029">
    <property type="entry name" value="R-SEVEN BINDING PROTEIN (R7BP) HOMOLOG"/>
    <property type="match status" value="1"/>
</dbReference>
<accession>Q4V9P3</accession>
<proteinExistence type="evidence at transcript level"/>
<organism>
    <name type="scientific">Danio rerio</name>
    <name type="common">Zebrafish</name>
    <name type="synonym">Brachydanio rerio</name>
    <dbReference type="NCBI Taxonomy" id="7955"/>
    <lineage>
        <taxon>Eukaryota</taxon>
        <taxon>Metazoa</taxon>
        <taxon>Chordata</taxon>
        <taxon>Craniata</taxon>
        <taxon>Vertebrata</taxon>
        <taxon>Euteleostomi</taxon>
        <taxon>Actinopterygii</taxon>
        <taxon>Neopterygii</taxon>
        <taxon>Teleostei</taxon>
        <taxon>Ostariophysi</taxon>
        <taxon>Cypriniformes</taxon>
        <taxon>Danionidae</taxon>
        <taxon>Danioninae</taxon>
        <taxon>Danio</taxon>
    </lineage>
</organism>
<sequence length="251" mass="28455">MCSAPNGRKNRPRSAANIFQIGKSSVRDPERRESTESARRAQRAMDDCRTTVQEFNTLVALHREQVISIGENTTDCPSLRAQMHKTRVKGCAVAQAAYQNLIAISGPEDGEIHPEICRLFIQLQCCLEMYITEMLKSMCLLGVLQLHRKGNDMCPELNMDCRVDESSDVPMLEDRSSSPMDFPQDSWVVCADIENIESDMREMRNLLSKLRETMPLPLKNQDDSSLLNLTPYPLVRQRKRRFSGLCCLVSG</sequence>
<feature type="chain" id="PRO_0000287599" description="Regulator of G-protein signaling 7-binding protein B">
    <location>
        <begin position="1"/>
        <end position="251"/>
    </location>
</feature>
<feature type="region of interest" description="Disordered" evidence="3">
    <location>
        <begin position="1"/>
        <end position="43"/>
    </location>
</feature>
<feature type="compositionally biased region" description="Basic and acidic residues" evidence="3">
    <location>
        <begin position="25"/>
        <end position="43"/>
    </location>
</feature>
<feature type="lipid moiety-binding region" description="S-palmitoyl cysteine" evidence="1">
    <location>
        <position position="246"/>
    </location>
</feature>
<feature type="lipid moiety-binding region" description="S-palmitoyl cysteine" evidence="1">
    <location>
        <position position="247"/>
    </location>
</feature>
<gene>
    <name type="primary">rgs7bpb</name>
    <name type="ORF">wu:fj83a05</name>
    <name type="ORF">zgc:110002</name>
</gene>
<protein>
    <recommendedName>
        <fullName>Regulator of G-protein signaling 7-binding protein B</fullName>
    </recommendedName>
    <alternativeName>
        <fullName>R7 family-binding protein B</fullName>
    </alternativeName>
</protein>
<name>R7BPB_DANRE</name>
<comment type="function">
    <text evidence="1">Regulator of G protein-coupled receptor (GPCR) signaling. Regulatory subunit of the R7-Gbeta5 complexes that acts by controlling the subcellular location of the R7-Gbeta5 complexes. When palmitoylated, it targets the R7-Gbeta5 complexes to the plasma membrane, leading to inhibit G protein alpha subunits. When it is unpalmitoylated, the R7-Gbeta5 complexes undergo a nuclear/cytoplasmic shuttling (By similarity).</text>
</comment>
<comment type="subcellular location">
    <subcellularLocation>
        <location evidence="1">Nucleus</location>
    </subcellularLocation>
    <subcellularLocation>
        <location evidence="1">Cytoplasm</location>
    </subcellularLocation>
    <subcellularLocation>
        <location evidence="1">Cell membrane</location>
        <topology evidence="1">Lipid-anchor</topology>
    </subcellularLocation>
</comment>
<comment type="PTM">
    <text evidence="2">Palmitoylated. Undergoes rapid palmitoylation turnover. Palmitoylation regulates the cell membrane and nuclear shuttling and the regulation of GPCR signaling. Upon depalmitoylation, it is targeted from the plasma membrane into the nucleus. GPCR signaling inhibits depalmitoylation and promotes localization to the plasma membrane.</text>
</comment>
<comment type="similarity">
    <text evidence="4">Belongs to the RGS7BP/RGS9BP family.</text>
</comment>
<keyword id="KW-1003">Cell membrane</keyword>
<keyword id="KW-0963">Cytoplasm</keyword>
<keyword id="KW-0449">Lipoprotein</keyword>
<keyword id="KW-0472">Membrane</keyword>
<keyword id="KW-0539">Nucleus</keyword>
<keyword id="KW-0564">Palmitate</keyword>
<keyword id="KW-1185">Reference proteome</keyword>
<keyword id="KW-0734">Signal transduction inhibitor</keyword>
<evidence type="ECO:0000250" key="1"/>
<evidence type="ECO:0000250" key="2">
    <source>
        <dbReference type="UniProtKB" id="Q8BQP9"/>
    </source>
</evidence>
<evidence type="ECO:0000256" key="3">
    <source>
        <dbReference type="SAM" id="MobiDB-lite"/>
    </source>
</evidence>
<evidence type="ECO:0000305" key="4"/>
<reference key="1">
    <citation type="submission" date="2005-06" db="EMBL/GenBank/DDBJ databases">
        <authorList>
            <consortium name="NIH - Zebrafish Gene Collection (ZGC) project"/>
        </authorList>
    </citation>
    <scope>NUCLEOTIDE SEQUENCE [LARGE SCALE MRNA]</scope>
    <source>
        <tissue>Larval eye</tissue>
    </source>
</reference>